<reference key="1">
    <citation type="journal article" date="2006" name="Genome Res.">
        <title>Skewed genomic variability in strains of the toxigenic bacterial pathogen, Clostridium perfringens.</title>
        <authorList>
            <person name="Myers G.S.A."/>
            <person name="Rasko D.A."/>
            <person name="Cheung J.K."/>
            <person name="Ravel J."/>
            <person name="Seshadri R."/>
            <person name="DeBoy R.T."/>
            <person name="Ren Q."/>
            <person name="Varga J."/>
            <person name="Awad M.M."/>
            <person name="Brinkac L.M."/>
            <person name="Daugherty S.C."/>
            <person name="Haft D.H."/>
            <person name="Dodson R.J."/>
            <person name="Madupu R."/>
            <person name="Nelson W.C."/>
            <person name="Rosovitz M.J."/>
            <person name="Sullivan S.A."/>
            <person name="Khouri H."/>
            <person name="Dimitrov G.I."/>
            <person name="Watkins K.L."/>
            <person name="Mulligan S."/>
            <person name="Benton J."/>
            <person name="Radune D."/>
            <person name="Fisher D.J."/>
            <person name="Atkins H.S."/>
            <person name="Hiscox T."/>
            <person name="Jost B.H."/>
            <person name="Billington S.J."/>
            <person name="Songer J.G."/>
            <person name="McClane B.A."/>
            <person name="Titball R.W."/>
            <person name="Rood J.I."/>
            <person name="Melville S.B."/>
            <person name="Paulsen I.T."/>
        </authorList>
    </citation>
    <scope>NUCLEOTIDE SEQUENCE [LARGE SCALE GENOMIC DNA]</scope>
    <source>
        <strain>SM101 / Type A</strain>
    </source>
</reference>
<sequence>MAAEFNNDWDDLLKDEFEKEYYLNLRKFLIDEYKTQKIHPSMYDIFNALKFTPYKDVKVVILGQDPYHGPNQAHGFSFSVKPGVQTPPSLRNMFKELNSDLGCYIPNNGFLESWAKQGILLLNTVLTVREGQANSHKGKGWEIFTDRVIELLNKREEPIVFILWGRNAISKETLITNPIHKIIKSVHPSPLSATRGFFGSKPFSKTNDFLVSINKEPIDWQIPNI</sequence>
<organism>
    <name type="scientific">Clostridium perfringens (strain SM101 / Type A)</name>
    <dbReference type="NCBI Taxonomy" id="289380"/>
    <lineage>
        <taxon>Bacteria</taxon>
        <taxon>Bacillati</taxon>
        <taxon>Bacillota</taxon>
        <taxon>Clostridia</taxon>
        <taxon>Eubacteriales</taxon>
        <taxon>Clostridiaceae</taxon>
        <taxon>Clostridium</taxon>
    </lineage>
</organism>
<gene>
    <name evidence="1" type="primary">ung</name>
    <name type="ordered locus">CPR_0249</name>
</gene>
<dbReference type="EC" id="3.2.2.27" evidence="1"/>
<dbReference type="EMBL" id="CP000312">
    <property type="protein sequence ID" value="ABG87781.1"/>
    <property type="molecule type" value="Genomic_DNA"/>
</dbReference>
<dbReference type="RefSeq" id="WP_011591391.1">
    <property type="nucleotide sequence ID" value="NC_008262.1"/>
</dbReference>
<dbReference type="SMR" id="Q0SWB8"/>
<dbReference type="KEGG" id="cpr:CPR_0249"/>
<dbReference type="Proteomes" id="UP000001824">
    <property type="component" value="Chromosome"/>
</dbReference>
<dbReference type="GO" id="GO:0005737">
    <property type="term" value="C:cytoplasm"/>
    <property type="evidence" value="ECO:0007669"/>
    <property type="project" value="UniProtKB-SubCell"/>
</dbReference>
<dbReference type="GO" id="GO:0004844">
    <property type="term" value="F:uracil DNA N-glycosylase activity"/>
    <property type="evidence" value="ECO:0007669"/>
    <property type="project" value="UniProtKB-UniRule"/>
</dbReference>
<dbReference type="GO" id="GO:0097510">
    <property type="term" value="P:base-excision repair, AP site formation via deaminated base removal"/>
    <property type="evidence" value="ECO:0007669"/>
    <property type="project" value="TreeGrafter"/>
</dbReference>
<dbReference type="CDD" id="cd10027">
    <property type="entry name" value="UDG-F1-like"/>
    <property type="match status" value="1"/>
</dbReference>
<dbReference type="FunFam" id="3.40.470.10:FF:000001">
    <property type="entry name" value="Uracil-DNA glycosylase"/>
    <property type="match status" value="1"/>
</dbReference>
<dbReference type="Gene3D" id="3.40.470.10">
    <property type="entry name" value="Uracil-DNA glycosylase-like domain"/>
    <property type="match status" value="1"/>
</dbReference>
<dbReference type="HAMAP" id="MF_00148">
    <property type="entry name" value="UDG"/>
    <property type="match status" value="1"/>
</dbReference>
<dbReference type="InterPro" id="IPR002043">
    <property type="entry name" value="UDG_fam1"/>
</dbReference>
<dbReference type="InterPro" id="IPR018085">
    <property type="entry name" value="Ura-DNA_Glyclase_AS"/>
</dbReference>
<dbReference type="InterPro" id="IPR005122">
    <property type="entry name" value="Uracil-DNA_glycosylase-like"/>
</dbReference>
<dbReference type="InterPro" id="IPR036895">
    <property type="entry name" value="Uracil-DNA_glycosylase-like_sf"/>
</dbReference>
<dbReference type="NCBIfam" id="NF003588">
    <property type="entry name" value="PRK05254.1-1"/>
    <property type="match status" value="1"/>
</dbReference>
<dbReference type="NCBIfam" id="NF003589">
    <property type="entry name" value="PRK05254.1-2"/>
    <property type="match status" value="1"/>
</dbReference>
<dbReference type="NCBIfam" id="NF003591">
    <property type="entry name" value="PRK05254.1-4"/>
    <property type="match status" value="1"/>
</dbReference>
<dbReference type="NCBIfam" id="NF003592">
    <property type="entry name" value="PRK05254.1-5"/>
    <property type="match status" value="1"/>
</dbReference>
<dbReference type="NCBIfam" id="TIGR00628">
    <property type="entry name" value="ung"/>
    <property type="match status" value="1"/>
</dbReference>
<dbReference type="PANTHER" id="PTHR11264">
    <property type="entry name" value="URACIL-DNA GLYCOSYLASE"/>
    <property type="match status" value="1"/>
</dbReference>
<dbReference type="PANTHER" id="PTHR11264:SF0">
    <property type="entry name" value="URACIL-DNA GLYCOSYLASE"/>
    <property type="match status" value="1"/>
</dbReference>
<dbReference type="Pfam" id="PF03167">
    <property type="entry name" value="UDG"/>
    <property type="match status" value="1"/>
</dbReference>
<dbReference type="SMART" id="SM00986">
    <property type="entry name" value="UDG"/>
    <property type="match status" value="1"/>
</dbReference>
<dbReference type="SMART" id="SM00987">
    <property type="entry name" value="UreE_C"/>
    <property type="match status" value="1"/>
</dbReference>
<dbReference type="SUPFAM" id="SSF52141">
    <property type="entry name" value="Uracil-DNA glycosylase-like"/>
    <property type="match status" value="1"/>
</dbReference>
<dbReference type="PROSITE" id="PS00130">
    <property type="entry name" value="U_DNA_GLYCOSYLASE"/>
    <property type="match status" value="1"/>
</dbReference>
<proteinExistence type="inferred from homology"/>
<comment type="function">
    <text evidence="1">Excises uracil residues from the DNA which can arise as a result of misincorporation of dUMP residues by DNA polymerase or due to deamination of cytosine.</text>
</comment>
<comment type="catalytic activity">
    <reaction evidence="1">
        <text>Hydrolyzes single-stranded DNA or mismatched double-stranded DNA and polynucleotides, releasing free uracil.</text>
        <dbReference type="EC" id="3.2.2.27"/>
    </reaction>
</comment>
<comment type="subcellular location">
    <subcellularLocation>
        <location evidence="1">Cytoplasm</location>
    </subcellularLocation>
</comment>
<comment type="similarity">
    <text evidence="1">Belongs to the uracil-DNA glycosylase (UDG) superfamily. UNG family.</text>
</comment>
<keyword id="KW-0963">Cytoplasm</keyword>
<keyword id="KW-0227">DNA damage</keyword>
<keyword id="KW-0234">DNA repair</keyword>
<keyword id="KW-0378">Hydrolase</keyword>
<name>UNG_CLOPS</name>
<feature type="chain" id="PRO_1000009882" description="Uracil-DNA glycosylase">
    <location>
        <begin position="1"/>
        <end position="225"/>
    </location>
</feature>
<feature type="active site" description="Proton acceptor" evidence="1">
    <location>
        <position position="65"/>
    </location>
</feature>
<evidence type="ECO:0000255" key="1">
    <source>
        <dbReference type="HAMAP-Rule" id="MF_00148"/>
    </source>
</evidence>
<accession>Q0SWB8</accession>
<protein>
    <recommendedName>
        <fullName evidence="1">Uracil-DNA glycosylase</fullName>
        <shortName evidence="1">UDG</shortName>
        <ecNumber evidence="1">3.2.2.27</ecNumber>
    </recommendedName>
</protein>